<gene>
    <name evidence="7" type="primary">ssb</name>
    <name type="ordered locus">Rv0054</name>
    <name type="ORF">MTCY21D4.17</name>
</gene>
<sequence length="164" mass="17353">MAGDTTITIVGNLTADPELRFTPSGAAVANFTVASTPRIYDRQTGEWKDGEALFLRCNIWREAAENVAESLTRGARVIVSGRLKQRSFETREGEKRTVIEVEVDEIGPSLRYATAKVNKASRSGGFGSGSRPAPAQTSSASGDDPWGSAPASGSFGGGDDEPPF</sequence>
<proteinExistence type="evidence at protein level"/>
<comment type="function">
    <text evidence="3 5 6">Binds single-stranded (ss)DNA (PubMed:10491108, PubMed:20724443, PubMed:24387047). At low concentrations (0.02 to 0.16 uM), stimulates the 5'-3' helicase activity of DnaB (PubMed:24387047). At higher concentrtions eventually totally inhibits DnaB helicase (PubMed:24387047).</text>
</comment>
<comment type="subunit">
    <text evidence="1 3 4 6">Homotetramer (PubMed:10491108, PubMed:12888346). Interacts with DnaB (PubMed:24387047).</text>
</comment>
<comment type="interaction">
    <interactant intactId="EBI-9081374">
        <id>P9WGD5</id>
    </interactant>
    <interactant intactId="EBI-9081402">
        <id>P9WMR3</id>
        <label>dnaB</label>
    </interactant>
    <organismsDiffer>false</organismsDiffer>
    <experiments>3</experiments>
</comment>
<accession>P9WGD5</accession>
<accession>L0T5J5</accession>
<accession>P0A610</accession>
<accession>P71711</accession>
<organism>
    <name type="scientific">Mycobacterium tuberculosis (strain ATCC 25618 / H37Rv)</name>
    <dbReference type="NCBI Taxonomy" id="83332"/>
    <lineage>
        <taxon>Bacteria</taxon>
        <taxon>Bacillati</taxon>
        <taxon>Actinomycetota</taxon>
        <taxon>Actinomycetes</taxon>
        <taxon>Mycobacteriales</taxon>
        <taxon>Mycobacteriaceae</taxon>
        <taxon>Mycobacterium</taxon>
        <taxon>Mycobacterium tuberculosis complex</taxon>
    </lineage>
</organism>
<keyword id="KW-0002">3D-structure</keyword>
<keyword id="KW-0238">DNA-binding</keyword>
<keyword id="KW-1185">Reference proteome</keyword>
<protein>
    <recommendedName>
        <fullName evidence="1">Single-stranded DNA-binding protein</fullName>
        <shortName evidence="1">SSB</shortName>
    </recommendedName>
</protein>
<dbReference type="EMBL" id="AL123456">
    <property type="protein sequence ID" value="CCP42776.1"/>
    <property type="molecule type" value="Genomic_DNA"/>
</dbReference>
<dbReference type="PIR" id="F70913">
    <property type="entry name" value="F70913"/>
</dbReference>
<dbReference type="RefSeq" id="NP_214568.1">
    <property type="nucleotide sequence ID" value="NC_000962.3"/>
</dbReference>
<dbReference type="RefSeq" id="WP_003400534.1">
    <property type="nucleotide sequence ID" value="NZ_NVQJ01000005.1"/>
</dbReference>
<dbReference type="PDB" id="1UE1">
    <property type="method" value="X-ray"/>
    <property type="resolution" value="2.50 A"/>
    <property type="chains" value="A/B=1-164"/>
</dbReference>
<dbReference type="PDB" id="1UE5">
    <property type="method" value="X-ray"/>
    <property type="resolution" value="2.60 A"/>
    <property type="chains" value="A/B=1-164"/>
</dbReference>
<dbReference type="PDB" id="1UE6">
    <property type="method" value="X-ray"/>
    <property type="resolution" value="2.70 A"/>
    <property type="chains" value="A/B/C/D=1-164"/>
</dbReference>
<dbReference type="PDB" id="1UE7">
    <property type="method" value="X-ray"/>
    <property type="resolution" value="3.20 A"/>
    <property type="chains" value="A/B/C/D=1-164"/>
</dbReference>
<dbReference type="PDB" id="7F5Y">
    <property type="method" value="X-ray"/>
    <property type="resolution" value="1.92 A"/>
    <property type="chains" value="A/B=1-164"/>
</dbReference>
<dbReference type="PDB" id="7F5Z">
    <property type="method" value="X-ray"/>
    <property type="resolution" value="3.00 A"/>
    <property type="chains" value="A/B=1-164"/>
</dbReference>
<dbReference type="PDBsum" id="1UE1"/>
<dbReference type="PDBsum" id="1UE5"/>
<dbReference type="PDBsum" id="1UE6"/>
<dbReference type="PDBsum" id="1UE7"/>
<dbReference type="PDBsum" id="7F5Y"/>
<dbReference type="PDBsum" id="7F5Z"/>
<dbReference type="SASBDB" id="P9WGD5"/>
<dbReference type="SMR" id="P9WGD5"/>
<dbReference type="FunCoup" id="P9WGD5">
    <property type="interactions" value="65"/>
</dbReference>
<dbReference type="IntAct" id="P9WGD5">
    <property type="interactions" value="1"/>
</dbReference>
<dbReference type="MINT" id="P9WGD5"/>
<dbReference type="STRING" id="83332.Rv0054"/>
<dbReference type="PaxDb" id="83332-Rv0054"/>
<dbReference type="DNASU" id="887013"/>
<dbReference type="GeneID" id="887013"/>
<dbReference type="KEGG" id="mtu:Rv0054"/>
<dbReference type="KEGG" id="mtv:RVBD_0054"/>
<dbReference type="TubercuList" id="Rv0054"/>
<dbReference type="eggNOG" id="COG0629">
    <property type="taxonomic scope" value="Bacteria"/>
</dbReference>
<dbReference type="InParanoid" id="P9WGD5"/>
<dbReference type="OrthoDB" id="9809878at2"/>
<dbReference type="PhylomeDB" id="P9WGD5"/>
<dbReference type="EvolutionaryTrace" id="P9WGD5"/>
<dbReference type="Proteomes" id="UP000001584">
    <property type="component" value="Chromosome"/>
</dbReference>
<dbReference type="GO" id="GO:0005576">
    <property type="term" value="C:extracellular region"/>
    <property type="evidence" value="ECO:0007005"/>
    <property type="project" value="MTBBASE"/>
</dbReference>
<dbReference type="GO" id="GO:0009295">
    <property type="term" value="C:nucleoid"/>
    <property type="evidence" value="ECO:0000318"/>
    <property type="project" value="GO_Central"/>
</dbReference>
<dbReference type="GO" id="GO:0005886">
    <property type="term" value="C:plasma membrane"/>
    <property type="evidence" value="ECO:0007005"/>
    <property type="project" value="MTBBASE"/>
</dbReference>
<dbReference type="GO" id="GO:0008047">
    <property type="term" value="F:enzyme activator activity"/>
    <property type="evidence" value="ECO:0000318"/>
    <property type="project" value="GO_Central"/>
</dbReference>
<dbReference type="GO" id="GO:0003697">
    <property type="term" value="F:single-stranded DNA binding"/>
    <property type="evidence" value="ECO:0000314"/>
    <property type="project" value="MTBBASE"/>
</dbReference>
<dbReference type="GO" id="GO:0006974">
    <property type="term" value="P:DNA damage response"/>
    <property type="evidence" value="ECO:0000270"/>
    <property type="project" value="MTBBASE"/>
</dbReference>
<dbReference type="GO" id="GO:0006260">
    <property type="term" value="P:DNA replication"/>
    <property type="evidence" value="ECO:0000318"/>
    <property type="project" value="GO_Central"/>
</dbReference>
<dbReference type="GO" id="GO:0046677">
    <property type="term" value="P:response to antibiotic"/>
    <property type="evidence" value="ECO:0000270"/>
    <property type="project" value="MTBBASE"/>
</dbReference>
<dbReference type="CDD" id="cd04496">
    <property type="entry name" value="SSB_OBF"/>
    <property type="match status" value="1"/>
</dbReference>
<dbReference type="FunFam" id="2.40.50.140:FF:000057">
    <property type="entry name" value="Single-stranded DNA-binding protein"/>
    <property type="match status" value="1"/>
</dbReference>
<dbReference type="Gene3D" id="2.40.50.140">
    <property type="entry name" value="Nucleic acid-binding proteins"/>
    <property type="match status" value="1"/>
</dbReference>
<dbReference type="HAMAP" id="MF_00984">
    <property type="entry name" value="SSB"/>
    <property type="match status" value="1"/>
</dbReference>
<dbReference type="InterPro" id="IPR012340">
    <property type="entry name" value="NA-bd_OB-fold"/>
</dbReference>
<dbReference type="InterPro" id="IPR000424">
    <property type="entry name" value="Primosome_PriB/ssb"/>
</dbReference>
<dbReference type="InterPro" id="IPR011344">
    <property type="entry name" value="ssDNA-bd"/>
</dbReference>
<dbReference type="NCBIfam" id="NF005851">
    <property type="entry name" value="PRK07772.1"/>
    <property type="match status" value="1"/>
</dbReference>
<dbReference type="NCBIfam" id="TIGR00621">
    <property type="entry name" value="ssb"/>
    <property type="match status" value="1"/>
</dbReference>
<dbReference type="PANTHER" id="PTHR10302">
    <property type="entry name" value="SINGLE-STRANDED DNA-BINDING PROTEIN"/>
    <property type="match status" value="1"/>
</dbReference>
<dbReference type="PANTHER" id="PTHR10302:SF27">
    <property type="entry name" value="SINGLE-STRANDED DNA-BINDING PROTEIN"/>
    <property type="match status" value="1"/>
</dbReference>
<dbReference type="Pfam" id="PF00436">
    <property type="entry name" value="SSB"/>
    <property type="match status" value="1"/>
</dbReference>
<dbReference type="SUPFAM" id="SSF50249">
    <property type="entry name" value="Nucleic acid-binding proteins"/>
    <property type="match status" value="1"/>
</dbReference>
<dbReference type="PROSITE" id="PS50935">
    <property type="entry name" value="SSB"/>
    <property type="match status" value="1"/>
</dbReference>
<reference key="1">
    <citation type="journal article" date="1998" name="Nature">
        <title>Deciphering the biology of Mycobacterium tuberculosis from the complete genome sequence.</title>
        <authorList>
            <person name="Cole S.T."/>
            <person name="Brosch R."/>
            <person name="Parkhill J."/>
            <person name="Garnier T."/>
            <person name="Churcher C.M."/>
            <person name="Harris D.E."/>
            <person name="Gordon S.V."/>
            <person name="Eiglmeier K."/>
            <person name="Gas S."/>
            <person name="Barry C.E. III"/>
            <person name="Tekaia F."/>
            <person name="Badcock K."/>
            <person name="Basham D."/>
            <person name="Brown D."/>
            <person name="Chillingworth T."/>
            <person name="Connor R."/>
            <person name="Davies R.M."/>
            <person name="Devlin K."/>
            <person name="Feltwell T."/>
            <person name="Gentles S."/>
            <person name="Hamlin N."/>
            <person name="Holroyd S."/>
            <person name="Hornsby T."/>
            <person name="Jagels K."/>
            <person name="Krogh A."/>
            <person name="McLean J."/>
            <person name="Moule S."/>
            <person name="Murphy L.D."/>
            <person name="Oliver S."/>
            <person name="Osborne J."/>
            <person name="Quail M.A."/>
            <person name="Rajandream M.A."/>
            <person name="Rogers J."/>
            <person name="Rutter S."/>
            <person name="Seeger K."/>
            <person name="Skelton S."/>
            <person name="Squares S."/>
            <person name="Squares R."/>
            <person name="Sulston J.E."/>
            <person name="Taylor K."/>
            <person name="Whitehead S."/>
            <person name="Barrell B.G."/>
        </authorList>
    </citation>
    <scope>NUCLEOTIDE SEQUENCE [LARGE SCALE GENOMIC DNA]</scope>
    <source>
        <strain>ATCC 25618 / H37Rv</strain>
    </source>
</reference>
<reference key="2">
    <citation type="journal article" date="1999" name="Eur. J. Biochem.">
        <title>Cloning, over-expression and biochemical characterization of the single-stranded DNA binding protein from Mycobacterium tuberculosis.</title>
        <authorList>
            <person name="Purnapatre K."/>
            <person name="Varshney U."/>
        </authorList>
    </citation>
    <scope>SSDNA-BINDING</scope>
    <scope>SUBUNIT</scope>
</reference>
<reference key="3">
    <citation type="journal article" date="2010" name="Nucleic Acids Res.">
        <title>Characterization of an interplay between a Mycobacterium tuberculosis MazF homolog, Rv1495 and its sole DNA topoisomerase I.</title>
        <authorList>
            <person name="Huang F."/>
            <person name="He Z.G."/>
        </authorList>
    </citation>
    <scope>SSDNA-BINDING</scope>
    <source>
        <strain>ATCC 25618 / H37Rv</strain>
    </source>
</reference>
<reference key="4">
    <citation type="journal article" date="2003" name="J. Mol. Biol.">
        <title>Structure of Mycobacterium tuberculosis single-stranded DNA-binding protein. Variability in quaternary structure and its implications.</title>
        <authorList>
            <person name="Saikrishnan K."/>
            <person name="Jeyakanthan J."/>
            <person name="Venkatesh J."/>
            <person name="Acharya N."/>
            <person name="Sekar K."/>
            <person name="Varshney U."/>
            <person name="Vijayan M."/>
        </authorList>
    </citation>
    <scope>CRYSTALLIZATION</scope>
    <scope>SUBUNIT</scope>
</reference>
<reference key="5">
    <citation type="journal article" date="2011" name="Mol. Cell. Proteomics">
        <title>Proteogenomic analysis of Mycobacterium tuberculosis by high resolution mass spectrometry.</title>
        <authorList>
            <person name="Kelkar D.S."/>
            <person name="Kumar D."/>
            <person name="Kumar P."/>
            <person name="Balakrishnan L."/>
            <person name="Muthusamy B."/>
            <person name="Yadav A.K."/>
            <person name="Shrivastava P."/>
            <person name="Marimuthu A."/>
            <person name="Anand S."/>
            <person name="Sundaram H."/>
            <person name="Kingsbury R."/>
            <person name="Harsha H.C."/>
            <person name="Nair B."/>
            <person name="Prasad T.S."/>
            <person name="Chauhan D.S."/>
            <person name="Katoch K."/>
            <person name="Katoch V.M."/>
            <person name="Kumar P."/>
            <person name="Chaerkady R."/>
            <person name="Ramachandran S."/>
            <person name="Dash D."/>
            <person name="Pandey A."/>
        </authorList>
    </citation>
    <scope>IDENTIFICATION BY MASS SPECTROMETRY [LARGE SCALE ANALYSIS]</scope>
    <source>
        <strain>ATCC 25618 / H37Rv</strain>
    </source>
</reference>
<reference key="6">
    <citation type="journal article" date="2014" name="FEBS J.">
        <title>Functional characterization of DnaB helicase and its modulation by single-stranded DNA binding protein in Mycobacterium tuberculosis.</title>
        <authorList>
            <person name="Zhang H."/>
            <person name="Zhang Z."/>
            <person name="Yang J."/>
            <person name="He Z.G."/>
        </authorList>
    </citation>
    <scope>INTERACTION WITH DNAB</scope>
    <scope>SSDNA-BINDING</scope>
    <scope>MUTAGENESIS OF ASN-12; PHE-21; PRO-132; 145-PRO--PHE-164 AND 155-PHE--PHE-165</scope>
</reference>
<feature type="chain" id="PRO_0000096069" description="Single-stranded DNA-binding protein">
    <location>
        <begin position="1"/>
        <end position="164"/>
    </location>
</feature>
<feature type="domain" description="SSB" evidence="1">
    <location>
        <begin position="1"/>
        <end position="110"/>
    </location>
</feature>
<feature type="region of interest" description="Disordered" evidence="2">
    <location>
        <begin position="120"/>
        <end position="164"/>
    </location>
</feature>
<feature type="mutagenesis site" description="2-fold increase of stimulation of DnaB helicase activity; when associated with L-132." evidence="6">
    <original>N</original>
    <variation>S</variation>
    <location>
        <position position="12"/>
    </location>
</feature>
<feature type="mutagenesis site" description="No longer stimulates DnaB helicase activity." evidence="6">
    <original>F</original>
    <variation>L</variation>
    <location>
        <position position="21"/>
    </location>
</feature>
<feature type="mutagenesis site" description="2-fold increase of stimulation of DnaB helicase activity; when associated with S-12." evidence="6">
    <original>P</original>
    <variation>L</variation>
    <location>
        <position position="132"/>
    </location>
</feature>
<feature type="mutagenesis site" description="Loss of interaction with DnaB, weakly stimulates helicase activity of DnaB." evidence="6">
    <location>
        <begin position="145"/>
        <end position="164"/>
    </location>
</feature>
<feature type="mutagenesis site" description="Still interacts with DnaB." evidence="6">
    <location>
        <begin position="155"/>
        <end position="164"/>
    </location>
</feature>
<feature type="strand" evidence="10">
    <location>
        <begin position="6"/>
        <end position="15"/>
    </location>
</feature>
<feature type="strand" evidence="10">
    <location>
        <begin position="18"/>
        <end position="21"/>
    </location>
</feature>
<feature type="turn" evidence="9">
    <location>
        <begin position="23"/>
        <end position="25"/>
    </location>
</feature>
<feature type="strand" evidence="10">
    <location>
        <begin position="27"/>
        <end position="35"/>
    </location>
</feature>
<feature type="strand" evidence="10">
    <location>
        <begin position="39"/>
        <end position="41"/>
    </location>
</feature>
<feature type="turn" evidence="10">
    <location>
        <begin position="42"/>
        <end position="45"/>
    </location>
</feature>
<feature type="strand" evidence="10">
    <location>
        <begin position="53"/>
        <end position="60"/>
    </location>
</feature>
<feature type="helix" evidence="10">
    <location>
        <begin position="61"/>
        <end position="70"/>
    </location>
</feature>
<feature type="strand" evidence="10">
    <location>
        <begin position="76"/>
        <end position="88"/>
    </location>
</feature>
<feature type="strand" evidence="8">
    <location>
        <begin position="91"/>
        <end position="93"/>
    </location>
</feature>
<feature type="strand" evidence="10">
    <location>
        <begin position="94"/>
        <end position="108"/>
    </location>
</feature>
<feature type="strand" evidence="10">
    <location>
        <begin position="110"/>
        <end position="118"/>
    </location>
</feature>
<name>SSB_MYCTU</name>
<evidence type="ECO:0000255" key="1">
    <source>
        <dbReference type="HAMAP-Rule" id="MF_00984"/>
    </source>
</evidence>
<evidence type="ECO:0000256" key="2">
    <source>
        <dbReference type="SAM" id="MobiDB-lite"/>
    </source>
</evidence>
<evidence type="ECO:0000269" key="3">
    <source>
    </source>
</evidence>
<evidence type="ECO:0000269" key="4">
    <source>
    </source>
</evidence>
<evidence type="ECO:0000269" key="5">
    <source>
    </source>
</evidence>
<evidence type="ECO:0000269" key="6">
    <source>
    </source>
</evidence>
<evidence type="ECO:0000303" key="7">
    <source>
    </source>
</evidence>
<evidence type="ECO:0007829" key="8">
    <source>
        <dbReference type="PDB" id="1UE5"/>
    </source>
</evidence>
<evidence type="ECO:0007829" key="9">
    <source>
        <dbReference type="PDB" id="1UE7"/>
    </source>
</evidence>
<evidence type="ECO:0007829" key="10">
    <source>
        <dbReference type="PDB" id="7F5Y"/>
    </source>
</evidence>